<proteinExistence type="evidence at protein level"/>
<dbReference type="EMBL" id="X01962">
    <property type="protein sequence ID" value="CAA25998.1"/>
    <property type="molecule type" value="Genomic_DNA"/>
</dbReference>
<dbReference type="EMBL" id="X77688">
    <property type="protein sequence ID" value="CAA54770.1"/>
    <property type="molecule type" value="Genomic_DNA"/>
</dbReference>
<dbReference type="EMBL" id="Z49465">
    <property type="protein sequence ID" value="CAA89485.1"/>
    <property type="molecule type" value="Genomic_DNA"/>
</dbReference>
<dbReference type="EMBL" id="BK006943">
    <property type="protein sequence ID" value="DAA08617.1"/>
    <property type="molecule type" value="Genomic_DNA"/>
</dbReference>
<dbReference type="PIR" id="A23082">
    <property type="entry name" value="R4BY24"/>
</dbReference>
<dbReference type="RefSeq" id="NP_012345.1">
    <property type="nucleotide sequence ID" value="NM_001181623.1"/>
</dbReference>
<dbReference type="PDB" id="3J6X">
    <property type="method" value="EM"/>
    <property type="resolution" value="6.10 A"/>
    <property type="chains" value="22=1-130"/>
</dbReference>
<dbReference type="PDB" id="3J6Y">
    <property type="method" value="EM"/>
    <property type="resolution" value="6.10 A"/>
    <property type="chains" value="22=1-130"/>
</dbReference>
<dbReference type="PDB" id="3J77">
    <property type="method" value="EM"/>
    <property type="resolution" value="6.20 A"/>
    <property type="chains" value="22=1-130"/>
</dbReference>
<dbReference type="PDB" id="3J78">
    <property type="method" value="EM"/>
    <property type="resolution" value="6.30 A"/>
    <property type="chains" value="22=1-130"/>
</dbReference>
<dbReference type="PDB" id="4U3M">
    <property type="method" value="X-ray"/>
    <property type="resolution" value="3.00 A"/>
    <property type="chains" value="D2/d2=2-130"/>
</dbReference>
<dbReference type="PDB" id="4U3N">
    <property type="method" value="X-ray"/>
    <property type="resolution" value="3.20 A"/>
    <property type="chains" value="D2/d2=2-130"/>
</dbReference>
<dbReference type="PDB" id="4U3U">
    <property type="method" value="X-ray"/>
    <property type="resolution" value="2.90 A"/>
    <property type="chains" value="D2/d2=2-130"/>
</dbReference>
<dbReference type="PDB" id="4U4N">
    <property type="method" value="X-ray"/>
    <property type="resolution" value="3.10 A"/>
    <property type="chains" value="D2/d2=2-130"/>
</dbReference>
<dbReference type="PDB" id="4U4O">
    <property type="method" value="X-ray"/>
    <property type="resolution" value="3.60 A"/>
    <property type="chains" value="D2/d2=2-130"/>
</dbReference>
<dbReference type="PDB" id="4U4Q">
    <property type="method" value="X-ray"/>
    <property type="resolution" value="3.00 A"/>
    <property type="chains" value="D2/d2=2-130"/>
</dbReference>
<dbReference type="PDB" id="4U4R">
    <property type="method" value="X-ray"/>
    <property type="resolution" value="2.80 A"/>
    <property type="chains" value="D2/d2=2-130"/>
</dbReference>
<dbReference type="PDB" id="4U4U">
    <property type="method" value="X-ray"/>
    <property type="resolution" value="3.00 A"/>
    <property type="chains" value="D2/d2=2-130"/>
</dbReference>
<dbReference type="PDB" id="4U4Y">
    <property type="method" value="X-ray"/>
    <property type="resolution" value="3.20 A"/>
    <property type="chains" value="D2/d2=2-130"/>
</dbReference>
<dbReference type="PDB" id="4U4Z">
    <property type="method" value="X-ray"/>
    <property type="resolution" value="3.10 A"/>
    <property type="chains" value="D2/d2=2-130"/>
</dbReference>
<dbReference type="PDB" id="4U50">
    <property type="method" value="X-ray"/>
    <property type="resolution" value="3.20 A"/>
    <property type="chains" value="D2/d2=2-130"/>
</dbReference>
<dbReference type="PDB" id="4U51">
    <property type="method" value="X-ray"/>
    <property type="resolution" value="3.20 A"/>
    <property type="chains" value="D2/d2=2-130"/>
</dbReference>
<dbReference type="PDB" id="4U52">
    <property type="method" value="X-ray"/>
    <property type="resolution" value="3.00 A"/>
    <property type="chains" value="D2/d2=2-130"/>
</dbReference>
<dbReference type="PDB" id="4U53">
    <property type="method" value="X-ray"/>
    <property type="resolution" value="3.30 A"/>
    <property type="chains" value="D2/d2=2-130"/>
</dbReference>
<dbReference type="PDB" id="4U55">
    <property type="method" value="X-ray"/>
    <property type="resolution" value="3.20 A"/>
    <property type="chains" value="D2/d2=2-130"/>
</dbReference>
<dbReference type="PDB" id="4U56">
    <property type="method" value="X-ray"/>
    <property type="resolution" value="3.45 A"/>
    <property type="chains" value="D2/d2=2-130"/>
</dbReference>
<dbReference type="PDB" id="4U6F">
    <property type="method" value="X-ray"/>
    <property type="resolution" value="3.10 A"/>
    <property type="chains" value="D2/d2=2-130"/>
</dbReference>
<dbReference type="PDB" id="4V4B">
    <property type="method" value="EM"/>
    <property type="resolution" value="11.70 A"/>
    <property type="chains" value="AH=2-130"/>
</dbReference>
<dbReference type="PDB" id="4V5Z">
    <property type="method" value="EM"/>
    <property type="resolution" value="8.70 A"/>
    <property type="chains" value="Ah=1-130"/>
</dbReference>
<dbReference type="PDB" id="4V6I">
    <property type="method" value="EM"/>
    <property type="resolution" value="8.80 A"/>
    <property type="chains" value="AH=1-130"/>
</dbReference>
<dbReference type="PDB" id="4V7R">
    <property type="method" value="X-ray"/>
    <property type="resolution" value="4.00 A"/>
    <property type="chains" value="AO/CO=1-130"/>
</dbReference>
<dbReference type="PDB" id="4V88">
    <property type="method" value="X-ray"/>
    <property type="resolution" value="3.00 A"/>
    <property type="chains" value="AW/CW=1-130"/>
</dbReference>
<dbReference type="PDB" id="4V8Y">
    <property type="method" value="EM"/>
    <property type="resolution" value="4.30 A"/>
    <property type="chains" value="AW=1-130"/>
</dbReference>
<dbReference type="PDB" id="4V8Z">
    <property type="method" value="EM"/>
    <property type="resolution" value="6.60 A"/>
    <property type="chains" value="AW=1-130"/>
</dbReference>
<dbReference type="PDB" id="4V92">
    <property type="method" value="EM"/>
    <property type="resolution" value="3.70 A"/>
    <property type="chains" value="W=2-130"/>
</dbReference>
<dbReference type="PDB" id="5DAT">
    <property type="method" value="X-ray"/>
    <property type="resolution" value="3.15 A"/>
    <property type="chains" value="D2=2-130, d2=2-130"/>
</dbReference>
<dbReference type="PDB" id="5DC3">
    <property type="method" value="X-ray"/>
    <property type="resolution" value="3.25 A"/>
    <property type="chains" value="D2/d2=2-130"/>
</dbReference>
<dbReference type="PDB" id="5DGE">
    <property type="method" value="X-ray"/>
    <property type="resolution" value="3.45 A"/>
    <property type="chains" value="D2/d2=2-130"/>
</dbReference>
<dbReference type="PDB" id="5DGF">
    <property type="method" value="X-ray"/>
    <property type="resolution" value="3.30 A"/>
    <property type="chains" value="D2/d2=2-130"/>
</dbReference>
<dbReference type="PDB" id="5DGV">
    <property type="method" value="X-ray"/>
    <property type="resolution" value="3.10 A"/>
    <property type="chains" value="D2/d2=2-130"/>
</dbReference>
<dbReference type="PDB" id="5FCI">
    <property type="method" value="X-ray"/>
    <property type="resolution" value="3.40 A"/>
    <property type="chains" value="D2/d2=2-130"/>
</dbReference>
<dbReference type="PDB" id="5FCJ">
    <property type="method" value="X-ray"/>
    <property type="resolution" value="3.10 A"/>
    <property type="chains" value="D2/d2=2-130"/>
</dbReference>
<dbReference type="PDB" id="5I4L">
    <property type="method" value="X-ray"/>
    <property type="resolution" value="3.10 A"/>
    <property type="chains" value="D2/d2=2-130"/>
</dbReference>
<dbReference type="PDB" id="5JPQ">
    <property type="method" value="EM"/>
    <property type="resolution" value="7.30 A"/>
    <property type="chains" value="z=1-130"/>
</dbReference>
<dbReference type="PDB" id="5JUO">
    <property type="method" value="EM"/>
    <property type="resolution" value="4.00 A"/>
    <property type="chains" value="TB=1-130"/>
</dbReference>
<dbReference type="PDB" id="5JUP">
    <property type="method" value="EM"/>
    <property type="resolution" value="3.50 A"/>
    <property type="chains" value="TB=1-130"/>
</dbReference>
<dbReference type="PDB" id="5JUS">
    <property type="method" value="EM"/>
    <property type="resolution" value="4.20 A"/>
    <property type="chains" value="TB=1-130"/>
</dbReference>
<dbReference type="PDB" id="5JUT">
    <property type="method" value="EM"/>
    <property type="resolution" value="4.00 A"/>
    <property type="chains" value="TB=1-130"/>
</dbReference>
<dbReference type="PDB" id="5JUU">
    <property type="method" value="EM"/>
    <property type="resolution" value="4.00 A"/>
    <property type="chains" value="TB=1-130"/>
</dbReference>
<dbReference type="PDB" id="5LL6">
    <property type="method" value="EM"/>
    <property type="resolution" value="3.90 A"/>
    <property type="chains" value="b=1-130"/>
</dbReference>
<dbReference type="PDB" id="5LYB">
    <property type="method" value="X-ray"/>
    <property type="resolution" value="3.25 A"/>
    <property type="chains" value="D2/d2=2-130"/>
</dbReference>
<dbReference type="PDB" id="5M1J">
    <property type="method" value="EM"/>
    <property type="resolution" value="3.30 A"/>
    <property type="chains" value="W2=2-130"/>
</dbReference>
<dbReference type="PDB" id="5MC6">
    <property type="method" value="EM"/>
    <property type="resolution" value="3.80 A"/>
    <property type="chains" value="b=1-130"/>
</dbReference>
<dbReference type="PDB" id="5MEI">
    <property type="method" value="X-ray"/>
    <property type="resolution" value="3.50 A"/>
    <property type="chains" value="X/d2=2-130"/>
</dbReference>
<dbReference type="PDB" id="5NDG">
    <property type="method" value="X-ray"/>
    <property type="resolution" value="3.70 A"/>
    <property type="chains" value="D2/d2=2-130"/>
</dbReference>
<dbReference type="PDB" id="5NDV">
    <property type="method" value="X-ray"/>
    <property type="resolution" value="3.30 A"/>
    <property type="chains" value="D2/d2=2-130"/>
</dbReference>
<dbReference type="PDB" id="5NDW">
    <property type="method" value="X-ray"/>
    <property type="resolution" value="3.70 A"/>
    <property type="chains" value="D2/d2=2-130"/>
</dbReference>
<dbReference type="PDB" id="5OBM">
    <property type="method" value="X-ray"/>
    <property type="resolution" value="3.40 A"/>
    <property type="chains" value="D2/d2=2-130"/>
</dbReference>
<dbReference type="PDB" id="5ON6">
    <property type="method" value="X-ray"/>
    <property type="resolution" value="3.10 A"/>
    <property type="chains" value="X/d2=2-130"/>
</dbReference>
<dbReference type="PDB" id="5TBW">
    <property type="method" value="X-ray"/>
    <property type="resolution" value="3.00 A"/>
    <property type="chains" value="X/d2=2-130"/>
</dbReference>
<dbReference type="PDB" id="5TGA">
    <property type="method" value="X-ray"/>
    <property type="resolution" value="3.30 A"/>
    <property type="chains" value="D2/d2=2-130"/>
</dbReference>
<dbReference type="PDB" id="5TGM">
    <property type="method" value="X-ray"/>
    <property type="resolution" value="3.50 A"/>
    <property type="chains" value="D2/d2=2-130"/>
</dbReference>
<dbReference type="PDB" id="5TZS">
    <property type="method" value="EM"/>
    <property type="resolution" value="5.10 A"/>
    <property type="chains" value="E=1-130"/>
</dbReference>
<dbReference type="PDB" id="5WLC">
    <property type="method" value="EM"/>
    <property type="resolution" value="3.80 A"/>
    <property type="chains" value="LE=1-130"/>
</dbReference>
<dbReference type="PDB" id="5WYJ">
    <property type="method" value="EM"/>
    <property type="resolution" value="8.70 A"/>
    <property type="chains" value="SX=1-130"/>
</dbReference>
<dbReference type="PDB" id="5WYK">
    <property type="method" value="EM"/>
    <property type="resolution" value="4.50 A"/>
    <property type="chains" value="SX=1-130"/>
</dbReference>
<dbReference type="PDB" id="6EML">
    <property type="method" value="EM"/>
    <property type="resolution" value="3.60 A"/>
    <property type="chains" value="b=1-130"/>
</dbReference>
<dbReference type="PDB" id="6FAI">
    <property type="method" value="EM"/>
    <property type="resolution" value="3.40 A"/>
    <property type="chains" value="W=1-130"/>
</dbReference>
<dbReference type="PDB" id="6GQ1">
    <property type="method" value="EM"/>
    <property type="resolution" value="4.40 A"/>
    <property type="chains" value="AM=2-130"/>
</dbReference>
<dbReference type="PDB" id="6GQB">
    <property type="method" value="EM"/>
    <property type="resolution" value="3.90 A"/>
    <property type="chains" value="AM=2-130"/>
</dbReference>
<dbReference type="PDB" id="6GQV">
    <property type="method" value="EM"/>
    <property type="resolution" value="4.00 A"/>
    <property type="chains" value="AM=2-130"/>
</dbReference>
<dbReference type="PDB" id="6HHQ">
    <property type="method" value="X-ray"/>
    <property type="resolution" value="3.10 A"/>
    <property type="chains" value="X/d2=1-130"/>
</dbReference>
<dbReference type="PDB" id="6I7O">
    <property type="method" value="EM"/>
    <property type="resolution" value="5.30 A"/>
    <property type="chains" value="b/bb=2-130"/>
</dbReference>
<dbReference type="PDB" id="6Q8Y">
    <property type="method" value="EM"/>
    <property type="resolution" value="3.10 A"/>
    <property type="chains" value="b=2-130"/>
</dbReference>
<dbReference type="PDB" id="6RBD">
    <property type="method" value="EM"/>
    <property type="resolution" value="3.47 A"/>
    <property type="chains" value="W=1-130"/>
</dbReference>
<dbReference type="PDB" id="6RBE">
    <property type="method" value="EM"/>
    <property type="resolution" value="3.80 A"/>
    <property type="chains" value="W=1-130"/>
</dbReference>
<dbReference type="PDB" id="6S47">
    <property type="method" value="EM"/>
    <property type="resolution" value="3.28 A"/>
    <property type="chains" value="BX=2-130"/>
</dbReference>
<dbReference type="PDB" id="6SNT">
    <property type="method" value="EM"/>
    <property type="resolution" value="2.80 A"/>
    <property type="chains" value="W=1-130"/>
</dbReference>
<dbReference type="PDB" id="6SV4">
    <property type="method" value="EM"/>
    <property type="resolution" value="3.30 A"/>
    <property type="chains" value="b/bb/bc=1-130"/>
</dbReference>
<dbReference type="PDB" id="6T4Q">
    <property type="method" value="EM"/>
    <property type="resolution" value="2.60 A"/>
    <property type="chains" value="SW=2-130"/>
</dbReference>
<dbReference type="PDB" id="6T7I">
    <property type="method" value="EM"/>
    <property type="resolution" value="3.20 A"/>
    <property type="chains" value="SW=1-130"/>
</dbReference>
<dbReference type="PDB" id="6T7T">
    <property type="method" value="EM"/>
    <property type="resolution" value="3.10 A"/>
    <property type="chains" value="SW=1-130"/>
</dbReference>
<dbReference type="PDB" id="6T83">
    <property type="method" value="EM"/>
    <property type="resolution" value="4.00 A"/>
    <property type="chains" value="Wb/x=1-130"/>
</dbReference>
<dbReference type="PDB" id="6TB3">
    <property type="method" value="EM"/>
    <property type="resolution" value="2.80 A"/>
    <property type="chains" value="b=2-130"/>
</dbReference>
<dbReference type="PDB" id="6TNU">
    <property type="method" value="EM"/>
    <property type="resolution" value="3.10 A"/>
    <property type="chains" value="b=2-130"/>
</dbReference>
<dbReference type="PDB" id="6WDR">
    <property type="method" value="EM"/>
    <property type="resolution" value="3.70 A"/>
    <property type="chains" value="W=2-130"/>
</dbReference>
<dbReference type="PDB" id="6WOO">
    <property type="method" value="EM"/>
    <property type="resolution" value="2.90 A"/>
    <property type="chains" value="WW=2-130"/>
</dbReference>
<dbReference type="PDB" id="6Y7C">
    <property type="method" value="EM"/>
    <property type="resolution" value="3.80 A"/>
    <property type="chains" value="W=1-130"/>
</dbReference>
<dbReference type="PDB" id="6Z6J">
    <property type="method" value="EM"/>
    <property type="resolution" value="3.40 A"/>
    <property type="chains" value="SW=1-130"/>
</dbReference>
<dbReference type="PDB" id="6Z6K">
    <property type="method" value="EM"/>
    <property type="resolution" value="3.40 A"/>
    <property type="chains" value="SW=1-130"/>
</dbReference>
<dbReference type="PDB" id="6ZCE">
    <property type="method" value="EM"/>
    <property type="resolution" value="5.30 A"/>
    <property type="chains" value="X=1-130"/>
</dbReference>
<dbReference type="PDB" id="6ZQA">
    <property type="method" value="EM"/>
    <property type="resolution" value="4.40 A"/>
    <property type="chains" value="DW=1-130"/>
</dbReference>
<dbReference type="PDB" id="6ZQB">
    <property type="method" value="EM"/>
    <property type="resolution" value="3.90 A"/>
    <property type="chains" value="DW=1-130"/>
</dbReference>
<dbReference type="PDB" id="6ZQC">
    <property type="method" value="EM"/>
    <property type="resolution" value="3.80 A"/>
    <property type="chains" value="DW=1-130"/>
</dbReference>
<dbReference type="PDB" id="6ZQD">
    <property type="method" value="EM"/>
    <property type="resolution" value="3.80 A"/>
    <property type="chains" value="DW=1-130"/>
</dbReference>
<dbReference type="PDB" id="6ZQE">
    <property type="method" value="EM"/>
    <property type="resolution" value="7.10 A"/>
    <property type="chains" value="DW=1-130"/>
</dbReference>
<dbReference type="PDB" id="6ZQF">
    <property type="method" value="EM"/>
    <property type="resolution" value="4.90 A"/>
    <property type="chains" value="DW=1-130"/>
</dbReference>
<dbReference type="PDB" id="6ZQG">
    <property type="method" value="EM"/>
    <property type="resolution" value="3.50 A"/>
    <property type="chains" value="DW=1-130"/>
</dbReference>
<dbReference type="PDB" id="6ZU9">
    <property type="method" value="EM"/>
    <property type="resolution" value="6.20 A"/>
    <property type="chains" value="b=1-130"/>
</dbReference>
<dbReference type="PDB" id="6ZVI">
    <property type="method" value="EM"/>
    <property type="resolution" value="3.00 A"/>
    <property type="chains" value="E=2-130"/>
</dbReference>
<dbReference type="PDB" id="7A1G">
    <property type="method" value="EM"/>
    <property type="resolution" value="3.00 A"/>
    <property type="chains" value="b=2-130"/>
</dbReference>
<dbReference type="PDB" id="7AJT">
    <property type="method" value="EM"/>
    <property type="resolution" value="4.60 A"/>
    <property type="chains" value="DW=1-130"/>
</dbReference>
<dbReference type="PDB" id="7AJU">
    <property type="method" value="EM"/>
    <property type="resolution" value="3.80 A"/>
    <property type="chains" value="DW=1-130"/>
</dbReference>
<dbReference type="PDB" id="7B7D">
    <property type="method" value="EM"/>
    <property type="resolution" value="3.30 A"/>
    <property type="chains" value="b=2-130"/>
</dbReference>
<dbReference type="PDB" id="7MPI">
    <property type="method" value="EM"/>
    <property type="resolution" value="3.05 A"/>
    <property type="chains" value="BW=2-130"/>
</dbReference>
<dbReference type="PDB" id="7MPJ">
    <property type="method" value="EM"/>
    <property type="resolution" value="2.70 A"/>
    <property type="chains" value="BW=2-130"/>
</dbReference>
<dbReference type="PDB" id="7N8B">
    <property type="method" value="EM"/>
    <property type="resolution" value="3.05 A"/>
    <property type="chains" value="BW=2-130"/>
</dbReference>
<dbReference type="PDB" id="7NRC">
    <property type="method" value="EM"/>
    <property type="resolution" value="3.90 A"/>
    <property type="chains" value="Sb=2-130"/>
</dbReference>
<dbReference type="PDB" id="7NRD">
    <property type="method" value="EM"/>
    <property type="resolution" value="4.36 A"/>
    <property type="chains" value="Sb=2-130"/>
</dbReference>
<dbReference type="PDB" id="7SUK">
    <property type="method" value="EM"/>
    <property type="resolution" value="3.99 A"/>
    <property type="chains" value="LE=4-130"/>
</dbReference>
<dbReference type="PDB" id="7WTL">
    <property type="method" value="EM"/>
    <property type="resolution" value="3.30 A"/>
    <property type="chains" value="SW=1-130"/>
</dbReference>
<dbReference type="PDB" id="7WTM">
    <property type="method" value="EM"/>
    <property type="resolution" value="3.50 A"/>
    <property type="chains" value="SW=1-130"/>
</dbReference>
<dbReference type="PDB" id="7WTN">
    <property type="method" value="EM"/>
    <property type="resolution" value="3.40 A"/>
    <property type="chains" value="SW=1-130"/>
</dbReference>
<dbReference type="PDB" id="7WTO">
    <property type="method" value="EM"/>
    <property type="resolution" value="3.50 A"/>
    <property type="chains" value="SW=1-130"/>
</dbReference>
<dbReference type="PDB" id="7WTP">
    <property type="method" value="EM"/>
    <property type="resolution" value="3.80 A"/>
    <property type="chains" value="SW=1-130"/>
</dbReference>
<dbReference type="PDB" id="7WTQ">
    <property type="method" value="EM"/>
    <property type="resolution" value="3.70 A"/>
    <property type="chains" value="SW=1-130"/>
</dbReference>
<dbReference type="PDB" id="7WTR">
    <property type="method" value="EM"/>
    <property type="resolution" value="3.50 A"/>
    <property type="chains" value="SW=1-130"/>
</dbReference>
<dbReference type="PDB" id="7ZPQ">
    <property type="method" value="EM"/>
    <property type="resolution" value="3.47 A"/>
    <property type="chains" value="AW=2-130"/>
</dbReference>
<dbReference type="PDB" id="7ZRS">
    <property type="method" value="EM"/>
    <property type="resolution" value="4.80 A"/>
    <property type="chains" value="AW=2-130"/>
</dbReference>
<dbReference type="PDB" id="7ZUW">
    <property type="method" value="EM"/>
    <property type="resolution" value="4.30 A"/>
    <property type="chains" value="AW=2-130"/>
</dbReference>
<dbReference type="PDB" id="7ZUX">
    <property type="method" value="EM"/>
    <property type="resolution" value="2.50 A"/>
    <property type="chains" value="DW=2-130"/>
</dbReference>
<dbReference type="PDB" id="7ZW0">
    <property type="method" value="EM"/>
    <property type="resolution" value="2.40 A"/>
    <property type="chains" value="sb=1-130"/>
</dbReference>
<dbReference type="PDB" id="8BN3">
    <property type="method" value="EM"/>
    <property type="resolution" value="2.40 A"/>
    <property type="chains" value="D2=2-130"/>
</dbReference>
<dbReference type="PDB" id="8BQD">
    <property type="method" value="EM"/>
    <property type="resolution" value="3.90 A"/>
    <property type="chains" value="b=2-130"/>
</dbReference>
<dbReference type="PDB" id="8BQX">
    <property type="method" value="EM"/>
    <property type="resolution" value="3.80 A"/>
    <property type="chains" value="b=2-130"/>
</dbReference>
<dbReference type="PDB" id="8C00">
    <property type="method" value="EM"/>
    <property type="resolution" value="2.90 A"/>
    <property type="chains" value="b=1-130"/>
</dbReference>
<dbReference type="PDB" id="8C01">
    <property type="method" value="EM"/>
    <property type="resolution" value="2.70 A"/>
    <property type="chains" value="b=1-130"/>
</dbReference>
<dbReference type="PDB" id="8C83">
    <property type="method" value="EM"/>
    <property type="resolution" value="3.00 A"/>
    <property type="chains" value="b=1-130"/>
</dbReference>
<dbReference type="PDB" id="8CAH">
    <property type="method" value="EM"/>
    <property type="resolution" value="3.00 A"/>
    <property type="chains" value="b=1-130"/>
</dbReference>
<dbReference type="PDB" id="8CAS">
    <property type="method" value="EM"/>
    <property type="resolution" value="3.30 A"/>
    <property type="chains" value="b=1-130"/>
</dbReference>
<dbReference type="PDB" id="8CBJ">
    <property type="method" value="EM"/>
    <property type="resolution" value="3.80 A"/>
    <property type="chains" value="W=1-130"/>
</dbReference>
<dbReference type="PDB" id="8CCS">
    <property type="method" value="EM"/>
    <property type="resolution" value="1.97 A"/>
    <property type="chains" value="y=1-130"/>
</dbReference>
<dbReference type="PDB" id="8CDL">
    <property type="method" value="EM"/>
    <property type="resolution" value="2.72 A"/>
    <property type="chains" value="y=1-130"/>
</dbReference>
<dbReference type="PDB" id="8CDR">
    <property type="method" value="EM"/>
    <property type="resolution" value="2.04 A"/>
    <property type="chains" value="y=1-130"/>
</dbReference>
<dbReference type="PDB" id="8CEH">
    <property type="method" value="EM"/>
    <property type="resolution" value="2.05 A"/>
    <property type="chains" value="y=1-130"/>
</dbReference>
<dbReference type="PDB" id="8CF5">
    <property type="method" value="EM"/>
    <property type="resolution" value="2.71 A"/>
    <property type="chains" value="y=1-130"/>
</dbReference>
<dbReference type="PDB" id="8CG8">
    <property type="method" value="EM"/>
    <property type="resolution" value="2.57 A"/>
    <property type="chains" value="y=1-130"/>
</dbReference>
<dbReference type="PDB" id="8CGN">
    <property type="method" value="EM"/>
    <property type="resolution" value="2.28 A"/>
    <property type="chains" value="y=1-130"/>
</dbReference>
<dbReference type="PDB" id="8CIV">
    <property type="method" value="EM"/>
    <property type="resolution" value="2.47 A"/>
    <property type="chains" value="y=1-130"/>
</dbReference>
<dbReference type="PDB" id="8CKU">
    <property type="method" value="EM"/>
    <property type="resolution" value="3.11 A"/>
    <property type="chains" value="y=1-130"/>
</dbReference>
<dbReference type="PDB" id="8CMJ">
    <property type="method" value="EM"/>
    <property type="resolution" value="3.79 A"/>
    <property type="chains" value="y=1-130"/>
</dbReference>
<dbReference type="PDB" id="8K2D">
    <property type="method" value="EM"/>
    <property type="resolution" value="3.20 A"/>
    <property type="chains" value="SW=1-130"/>
</dbReference>
<dbReference type="PDB" id="8K82">
    <property type="method" value="EM"/>
    <property type="resolution" value="3.00 A"/>
    <property type="chains" value="SW=1-130"/>
</dbReference>
<dbReference type="PDB" id="8P4V">
    <property type="method" value="X-ray"/>
    <property type="resolution" value="3.16 A"/>
    <property type="chains" value="X/d2=1-130"/>
</dbReference>
<dbReference type="PDB" id="8P9A">
    <property type="method" value="X-ray"/>
    <property type="resolution" value="2.90 A"/>
    <property type="chains" value="X/d2=1-130"/>
</dbReference>
<dbReference type="PDB" id="8T2X">
    <property type="method" value="EM"/>
    <property type="resolution" value="2.46 A"/>
    <property type="chains" value="BW=1-130"/>
</dbReference>
<dbReference type="PDB" id="8T2Y">
    <property type="method" value="EM"/>
    <property type="resolution" value="2.20 A"/>
    <property type="chains" value="BW=1-130"/>
</dbReference>
<dbReference type="PDB" id="8T2Z">
    <property type="method" value="EM"/>
    <property type="resolution" value="2.40 A"/>
    <property type="chains" value="BW=1-130"/>
</dbReference>
<dbReference type="PDB" id="8T30">
    <property type="method" value="EM"/>
    <property type="resolution" value="2.88 A"/>
    <property type="chains" value="BW=1-130"/>
</dbReference>
<dbReference type="PDB" id="8T3A">
    <property type="method" value="EM"/>
    <property type="resolution" value="2.86 A"/>
    <property type="chains" value="BW=1-130"/>
</dbReference>
<dbReference type="PDB" id="8T3B">
    <property type="method" value="EM"/>
    <property type="resolution" value="3.08 A"/>
    <property type="chains" value="BW=1-130"/>
</dbReference>
<dbReference type="PDB" id="8T3C">
    <property type="method" value="EM"/>
    <property type="resolution" value="3.86 A"/>
    <property type="chains" value="BW=1-130"/>
</dbReference>
<dbReference type="PDB" id="8T3D">
    <property type="method" value="EM"/>
    <property type="resolution" value="2.95 A"/>
    <property type="chains" value="BW=1-130"/>
</dbReference>
<dbReference type="PDB" id="8T3E">
    <property type="method" value="EM"/>
    <property type="resolution" value="3.04 A"/>
    <property type="chains" value="BW=1-130"/>
</dbReference>
<dbReference type="PDB" id="8T3F">
    <property type="method" value="EM"/>
    <property type="resolution" value="3.09 A"/>
    <property type="chains" value="BW=1-130"/>
</dbReference>
<dbReference type="PDB" id="8UT0">
    <property type="method" value="EM"/>
    <property type="resolution" value="3.22 A"/>
    <property type="chains" value="Sb=2-130"/>
</dbReference>
<dbReference type="PDB" id="8UTI">
    <property type="method" value="EM"/>
    <property type="resolution" value="3.13 A"/>
    <property type="chains" value="Sb=2-130"/>
</dbReference>
<dbReference type="PDB" id="8XU8">
    <property type="method" value="EM"/>
    <property type="resolution" value="3.40 A"/>
    <property type="chains" value="Sb=2-130"/>
</dbReference>
<dbReference type="PDB" id="8Y0U">
    <property type="method" value="EM"/>
    <property type="resolution" value="3.59 A"/>
    <property type="chains" value="SW=1-130"/>
</dbReference>
<dbReference type="PDB" id="8YLD">
    <property type="method" value="EM"/>
    <property type="resolution" value="3.90 A"/>
    <property type="chains" value="Sb=2-130"/>
</dbReference>
<dbReference type="PDB" id="8YLR">
    <property type="method" value="EM"/>
    <property type="resolution" value="3.90 A"/>
    <property type="chains" value="Sb=2-130"/>
</dbReference>
<dbReference type="PDB" id="8Z70">
    <property type="method" value="EM"/>
    <property type="resolution" value="3.20 A"/>
    <property type="chains" value="Sb=2-130"/>
</dbReference>
<dbReference type="PDB" id="8Z71">
    <property type="method" value="EM"/>
    <property type="resolution" value="3.60 A"/>
    <property type="chains" value="Sb=2-130"/>
</dbReference>
<dbReference type="PDB" id="9F9S">
    <property type="method" value="EM"/>
    <property type="resolution" value="2.90 A"/>
    <property type="chains" value="Rw/Sw=1-130"/>
</dbReference>
<dbReference type="PDBsum" id="3J6X"/>
<dbReference type="PDBsum" id="3J6Y"/>
<dbReference type="PDBsum" id="3J77"/>
<dbReference type="PDBsum" id="3J78"/>
<dbReference type="PDBsum" id="4U3M"/>
<dbReference type="PDBsum" id="4U3N"/>
<dbReference type="PDBsum" id="4U3U"/>
<dbReference type="PDBsum" id="4U4N"/>
<dbReference type="PDBsum" id="4U4O"/>
<dbReference type="PDBsum" id="4U4Q"/>
<dbReference type="PDBsum" id="4U4R"/>
<dbReference type="PDBsum" id="4U4U"/>
<dbReference type="PDBsum" id="4U4Y"/>
<dbReference type="PDBsum" id="4U4Z"/>
<dbReference type="PDBsum" id="4U50"/>
<dbReference type="PDBsum" id="4U51"/>
<dbReference type="PDBsum" id="4U52"/>
<dbReference type="PDBsum" id="4U53"/>
<dbReference type="PDBsum" id="4U55"/>
<dbReference type="PDBsum" id="4U56"/>
<dbReference type="PDBsum" id="4U6F"/>
<dbReference type="PDBsum" id="4V4B"/>
<dbReference type="PDBsum" id="4V5Z"/>
<dbReference type="PDBsum" id="4V6I"/>
<dbReference type="PDBsum" id="4V7R"/>
<dbReference type="PDBsum" id="4V88"/>
<dbReference type="PDBsum" id="4V8Y"/>
<dbReference type="PDBsum" id="4V8Z"/>
<dbReference type="PDBsum" id="4V92"/>
<dbReference type="PDBsum" id="5DAT"/>
<dbReference type="PDBsum" id="5DC3"/>
<dbReference type="PDBsum" id="5DGE"/>
<dbReference type="PDBsum" id="5DGF"/>
<dbReference type="PDBsum" id="5DGV"/>
<dbReference type="PDBsum" id="5FCI"/>
<dbReference type="PDBsum" id="5FCJ"/>
<dbReference type="PDBsum" id="5I4L"/>
<dbReference type="PDBsum" id="5JPQ"/>
<dbReference type="PDBsum" id="5JUO"/>
<dbReference type="PDBsum" id="5JUP"/>
<dbReference type="PDBsum" id="5JUS"/>
<dbReference type="PDBsum" id="5JUT"/>
<dbReference type="PDBsum" id="5JUU"/>
<dbReference type="PDBsum" id="5LL6"/>
<dbReference type="PDBsum" id="5LYB"/>
<dbReference type="PDBsum" id="5M1J"/>
<dbReference type="PDBsum" id="5MC6"/>
<dbReference type="PDBsum" id="5MEI"/>
<dbReference type="PDBsum" id="5NDG"/>
<dbReference type="PDBsum" id="5NDV"/>
<dbReference type="PDBsum" id="5NDW"/>
<dbReference type="PDBsum" id="5OBM"/>
<dbReference type="PDBsum" id="5ON6"/>
<dbReference type="PDBsum" id="5TBW"/>
<dbReference type="PDBsum" id="5TGA"/>
<dbReference type="PDBsum" id="5TGM"/>
<dbReference type="PDBsum" id="5TZS"/>
<dbReference type="PDBsum" id="5WLC"/>
<dbReference type="PDBsum" id="5WYJ"/>
<dbReference type="PDBsum" id="5WYK"/>
<dbReference type="PDBsum" id="6EML"/>
<dbReference type="PDBsum" id="6FAI"/>
<dbReference type="PDBsum" id="6GQ1"/>
<dbReference type="PDBsum" id="6GQB"/>
<dbReference type="PDBsum" id="6GQV"/>
<dbReference type="PDBsum" id="6HHQ"/>
<dbReference type="PDBsum" id="6I7O"/>
<dbReference type="PDBsum" id="6Q8Y"/>
<dbReference type="PDBsum" id="6RBD"/>
<dbReference type="PDBsum" id="6RBE"/>
<dbReference type="PDBsum" id="6S47"/>
<dbReference type="PDBsum" id="6SNT"/>
<dbReference type="PDBsum" id="6SV4"/>
<dbReference type="PDBsum" id="6T4Q"/>
<dbReference type="PDBsum" id="6T7I"/>
<dbReference type="PDBsum" id="6T7T"/>
<dbReference type="PDBsum" id="6T83"/>
<dbReference type="PDBsum" id="6TB3"/>
<dbReference type="PDBsum" id="6TNU"/>
<dbReference type="PDBsum" id="6WDR"/>
<dbReference type="PDBsum" id="6WOO"/>
<dbReference type="PDBsum" id="6Y7C"/>
<dbReference type="PDBsum" id="6Z6J"/>
<dbReference type="PDBsum" id="6Z6K"/>
<dbReference type="PDBsum" id="6ZCE"/>
<dbReference type="PDBsum" id="6ZQA"/>
<dbReference type="PDBsum" id="6ZQB"/>
<dbReference type="PDBsum" id="6ZQC"/>
<dbReference type="PDBsum" id="6ZQD"/>
<dbReference type="PDBsum" id="6ZQE"/>
<dbReference type="PDBsum" id="6ZQF"/>
<dbReference type="PDBsum" id="6ZQG"/>
<dbReference type="PDBsum" id="6ZU9"/>
<dbReference type="PDBsum" id="6ZVI"/>
<dbReference type="PDBsum" id="7A1G"/>
<dbReference type="PDBsum" id="7AJT"/>
<dbReference type="PDBsum" id="7AJU"/>
<dbReference type="PDBsum" id="7B7D"/>
<dbReference type="PDBsum" id="7MPI"/>
<dbReference type="PDBsum" id="7MPJ"/>
<dbReference type="PDBsum" id="7N8B"/>
<dbReference type="PDBsum" id="7NRC"/>
<dbReference type="PDBsum" id="7NRD"/>
<dbReference type="PDBsum" id="7SUK"/>
<dbReference type="PDBsum" id="7WTL"/>
<dbReference type="PDBsum" id="7WTM"/>
<dbReference type="PDBsum" id="7WTN"/>
<dbReference type="PDBsum" id="7WTO"/>
<dbReference type="PDBsum" id="7WTP"/>
<dbReference type="PDBsum" id="7WTQ"/>
<dbReference type="PDBsum" id="7WTR"/>
<dbReference type="PDBsum" id="7ZPQ"/>
<dbReference type="PDBsum" id="7ZRS"/>
<dbReference type="PDBsum" id="7ZUW"/>
<dbReference type="PDBsum" id="7ZUX"/>
<dbReference type="PDBsum" id="7ZW0"/>
<dbReference type="PDBsum" id="8BN3"/>
<dbReference type="PDBsum" id="8BQD"/>
<dbReference type="PDBsum" id="8BQX"/>
<dbReference type="PDBsum" id="8C00"/>
<dbReference type="PDBsum" id="8C01"/>
<dbReference type="PDBsum" id="8C83"/>
<dbReference type="PDBsum" id="8CAH"/>
<dbReference type="PDBsum" id="8CAS"/>
<dbReference type="PDBsum" id="8CBJ"/>
<dbReference type="PDBsum" id="8CCS"/>
<dbReference type="PDBsum" id="8CDL"/>
<dbReference type="PDBsum" id="8CDR"/>
<dbReference type="PDBsum" id="8CEH"/>
<dbReference type="PDBsum" id="8CF5"/>
<dbReference type="PDBsum" id="8CG8"/>
<dbReference type="PDBsum" id="8CGN"/>
<dbReference type="PDBsum" id="8CIV"/>
<dbReference type="PDBsum" id="8CKU"/>
<dbReference type="PDBsum" id="8CMJ"/>
<dbReference type="PDBsum" id="8K2D"/>
<dbReference type="PDBsum" id="8K82"/>
<dbReference type="PDBsum" id="8P4V"/>
<dbReference type="PDBsum" id="8P9A"/>
<dbReference type="PDBsum" id="8T2X"/>
<dbReference type="PDBsum" id="8T2Y"/>
<dbReference type="PDBsum" id="8T2Z"/>
<dbReference type="PDBsum" id="8T30"/>
<dbReference type="PDBsum" id="8T3A"/>
<dbReference type="PDBsum" id="8T3B"/>
<dbReference type="PDBsum" id="8T3C"/>
<dbReference type="PDBsum" id="8T3D"/>
<dbReference type="PDBsum" id="8T3E"/>
<dbReference type="PDBsum" id="8T3F"/>
<dbReference type="PDBsum" id="8UT0"/>
<dbReference type="PDBsum" id="8UTI"/>
<dbReference type="PDBsum" id="8XU8"/>
<dbReference type="PDBsum" id="8Y0U"/>
<dbReference type="PDBsum" id="8YLD"/>
<dbReference type="PDBsum" id="8YLR"/>
<dbReference type="PDBsum" id="8Z70"/>
<dbReference type="PDBsum" id="8Z71"/>
<dbReference type="PDBsum" id="9F9S"/>
<dbReference type="EMDB" id="EMD-0047"/>
<dbReference type="EMDB" id="EMD-0048"/>
<dbReference type="EMDB" id="EMD-0049"/>
<dbReference type="EMDB" id="EMD-10098"/>
<dbReference type="EMDB" id="EMD-10262"/>
<dbReference type="EMDB" id="EMD-10315"/>
<dbReference type="EMDB" id="EMD-10377"/>
<dbReference type="EMDB" id="EMD-10396"/>
<dbReference type="EMDB" id="EMD-10397"/>
<dbReference type="EMDB" id="EMD-10398"/>
<dbReference type="EMDB" id="EMD-10431"/>
<dbReference type="EMDB" id="EMD-10537"/>
<dbReference type="EMDB" id="EMD-10713"/>
<dbReference type="EMDB" id="EMD-11096"/>
<dbReference type="EMDB" id="EMD-11097"/>
<dbReference type="EMDB" id="EMD-11160"/>
<dbReference type="EMDB" id="EMD-11357"/>
<dbReference type="EMDB" id="EMD-11358"/>
<dbReference type="EMDB" id="EMD-11359"/>
<dbReference type="EMDB" id="EMD-11360"/>
<dbReference type="EMDB" id="EMD-11361"/>
<dbReference type="EMDB" id="EMD-11362"/>
<dbReference type="EMDB" id="EMD-11363"/>
<dbReference type="EMDB" id="EMD-11439"/>
<dbReference type="EMDB" id="EMD-11608"/>
<dbReference type="EMDB" id="EMD-11807"/>
<dbReference type="EMDB" id="EMD-11808"/>
<dbReference type="EMDB" id="EMD-12081"/>
<dbReference type="EMDB" id="EMD-12534"/>
<dbReference type="EMDB" id="EMD-12535"/>
<dbReference type="EMDB" id="EMD-14979"/>
<dbReference type="EMDB" id="EMD-14990"/>
<dbReference type="EMDB" id="EMD-16191"/>
<dbReference type="EMDB" id="EMD-16347"/>
<dbReference type="EMDB" id="EMD-16349"/>
<dbReference type="EMDB" id="EMD-16470"/>
<dbReference type="EMDB" id="EMD-16525"/>
<dbReference type="EMDB" id="EMD-16533"/>
<dbReference type="EMDB" id="EMD-16541"/>
<dbReference type="EMDB" id="EMD-16563"/>
<dbReference type="EMDB" id="EMD-16591"/>
<dbReference type="EMDB" id="EMD-16594"/>
<dbReference type="EMDB" id="EMD-16609"/>
<dbReference type="EMDB" id="EMD-16616"/>
<dbReference type="EMDB" id="EMD-16634"/>
<dbReference type="EMDB" id="EMD-16648"/>
<dbReference type="EMDB" id="EMD-16684"/>
<dbReference type="EMDB" id="EMD-16702"/>
<dbReference type="EMDB" id="EMD-16729"/>
<dbReference type="EMDB" id="EMD-21644"/>
<dbReference type="EMDB" id="EMD-21859"/>
<dbReference type="EMDB" id="EMD-23934"/>
<dbReference type="EMDB" id="EMD-23935"/>
<dbReference type="EMDB" id="EMD-24235"/>
<dbReference type="EMDB" id="EMD-25441"/>
<dbReference type="EMDB" id="EMD-32790"/>
<dbReference type="EMDB" id="EMD-32791"/>
<dbReference type="EMDB" id="EMD-32792"/>
<dbReference type="EMDB" id="EMD-32793"/>
<dbReference type="EMDB" id="EMD-32794"/>
<dbReference type="EMDB" id="EMD-32795"/>
<dbReference type="EMDB" id="EMD-32796"/>
<dbReference type="EMDB" id="EMD-3461"/>
<dbReference type="EMDB" id="EMD-36839"/>
<dbReference type="EMDB" id="EMD-36945"/>
<dbReference type="EMDB" id="EMD-38660"/>
<dbReference type="EMDB" id="EMD-4140"/>
<dbReference type="EMDB" id="EMD-4214"/>
<dbReference type="EMDB" id="EMD-42525"/>
<dbReference type="EMDB" id="EMD-42540"/>
<dbReference type="EMDB" id="EMD-4427"/>
<dbReference type="EMDB" id="EMD-4474"/>
<dbReference type="EMDB" id="EMD-4792"/>
<dbReference type="EMDB" id="EMD-4793"/>
<dbReference type="EMDB" id="EMD-50259"/>
<dbReference type="EMDB" id="EMD-6695"/>
<dbReference type="EMDB" id="EMD-6696"/>
<dbReference type="EMDB" id="EMD-8473"/>
<dbReference type="EMDB" id="EMD-8859"/>
<dbReference type="SMR" id="P0C0W1"/>
<dbReference type="BioGRID" id="33573">
    <property type="interactions" value="683"/>
</dbReference>
<dbReference type="ComplexPortal" id="CPX-1599">
    <property type="entry name" value="40S cytosolic small ribosomal subunit"/>
</dbReference>
<dbReference type="DIP" id="DIP-5473N"/>
<dbReference type="FunCoup" id="P0C0W1">
    <property type="interactions" value="1312"/>
</dbReference>
<dbReference type="IntAct" id="P0C0W1">
    <property type="interactions" value="79"/>
</dbReference>
<dbReference type="MINT" id="P0C0W1"/>
<dbReference type="STRING" id="4932.YJL190C"/>
<dbReference type="iPTMnet" id="P0C0W1"/>
<dbReference type="PaxDb" id="4932-YJL190C"/>
<dbReference type="PeptideAtlas" id="P0C0W1"/>
<dbReference type="TopDownProteomics" id="P0C0W1"/>
<dbReference type="EnsemblFungi" id="YJL190C_mRNA">
    <property type="protein sequence ID" value="YJL190C"/>
    <property type="gene ID" value="YJL190C"/>
</dbReference>
<dbReference type="GeneID" id="853249"/>
<dbReference type="KEGG" id="sce:YJL190C"/>
<dbReference type="AGR" id="SGD:S000003726"/>
<dbReference type="SGD" id="S000003726">
    <property type="gene designation" value="RPS22A"/>
</dbReference>
<dbReference type="VEuPathDB" id="FungiDB:YJL190C"/>
<dbReference type="eggNOG" id="KOG1754">
    <property type="taxonomic scope" value="Eukaryota"/>
</dbReference>
<dbReference type="GeneTree" id="ENSGT00950000183198"/>
<dbReference type="HOGENOM" id="CLU_098428_1_1_1"/>
<dbReference type="InParanoid" id="P0C0W1"/>
<dbReference type="OMA" id="LPAKNFG"/>
<dbReference type="OrthoDB" id="10250260at2759"/>
<dbReference type="BioCyc" id="YEAST:G3O-31622-MONOMER"/>
<dbReference type="Reactome" id="R-SCE-156827">
    <property type="pathway name" value="L13a-mediated translational silencing of Ceruloplasmin expression"/>
</dbReference>
<dbReference type="Reactome" id="R-SCE-1799339">
    <property type="pathway name" value="SRP-dependent cotranslational protein targeting to membrane"/>
</dbReference>
<dbReference type="Reactome" id="R-SCE-72649">
    <property type="pathway name" value="Translation initiation complex formation"/>
</dbReference>
<dbReference type="Reactome" id="R-SCE-72689">
    <property type="pathway name" value="Formation of a pool of free 40S subunits"/>
</dbReference>
<dbReference type="Reactome" id="R-SCE-72695">
    <property type="pathway name" value="Formation of the ternary complex, and subsequently, the 43S complex"/>
</dbReference>
<dbReference type="Reactome" id="R-SCE-72702">
    <property type="pathway name" value="Ribosomal scanning and start codon recognition"/>
</dbReference>
<dbReference type="Reactome" id="R-SCE-72706">
    <property type="pathway name" value="GTP hydrolysis and joining of the 60S ribosomal subunit"/>
</dbReference>
<dbReference type="Reactome" id="R-SCE-975956">
    <property type="pathway name" value="Nonsense Mediated Decay (NMD) independent of the Exon Junction Complex (EJC)"/>
</dbReference>
<dbReference type="Reactome" id="R-SCE-975957">
    <property type="pathway name" value="Nonsense Mediated Decay (NMD) enhanced by the Exon Junction Complex (EJC)"/>
</dbReference>
<dbReference type="BioGRID-ORCS" id="853249">
    <property type="hits" value="8 hits in 10 CRISPR screens"/>
</dbReference>
<dbReference type="PRO" id="PR:P0C0W1"/>
<dbReference type="Proteomes" id="UP000002311">
    <property type="component" value="Chromosome X"/>
</dbReference>
<dbReference type="RNAct" id="P0C0W1">
    <property type="molecule type" value="protein"/>
</dbReference>
<dbReference type="GO" id="GO:0005829">
    <property type="term" value="C:cytosol"/>
    <property type="evidence" value="ECO:0000304"/>
    <property type="project" value="Reactome"/>
</dbReference>
<dbReference type="GO" id="GO:0022627">
    <property type="term" value="C:cytosolic small ribosomal subunit"/>
    <property type="evidence" value="ECO:0000314"/>
    <property type="project" value="SGD"/>
</dbReference>
<dbReference type="GO" id="GO:0003735">
    <property type="term" value="F:structural constituent of ribosome"/>
    <property type="evidence" value="ECO:0000314"/>
    <property type="project" value="SGD"/>
</dbReference>
<dbReference type="GO" id="GO:0002181">
    <property type="term" value="P:cytoplasmic translation"/>
    <property type="evidence" value="ECO:0000305"/>
    <property type="project" value="SGD"/>
</dbReference>
<dbReference type="FunFam" id="3.30.1370.30:FF:000001">
    <property type="entry name" value="40S ribosomal protein S15a"/>
    <property type="match status" value="1"/>
</dbReference>
<dbReference type="FunFam" id="3.30.1490.10:FF:000002">
    <property type="entry name" value="40S ribosomal protein S15a"/>
    <property type="match status" value="1"/>
</dbReference>
<dbReference type="Gene3D" id="3.30.1370.30">
    <property type="match status" value="1"/>
</dbReference>
<dbReference type="Gene3D" id="3.30.1490.10">
    <property type="match status" value="1"/>
</dbReference>
<dbReference type="HAMAP" id="MF_01302_A">
    <property type="entry name" value="Ribosomal_uS8_A"/>
    <property type="match status" value="1"/>
</dbReference>
<dbReference type="InterPro" id="IPR000630">
    <property type="entry name" value="Ribosomal_uS8"/>
</dbReference>
<dbReference type="InterPro" id="IPR047863">
    <property type="entry name" value="Ribosomal_uS8_CS"/>
</dbReference>
<dbReference type="InterPro" id="IPR035987">
    <property type="entry name" value="Ribosomal_uS8_sf"/>
</dbReference>
<dbReference type="NCBIfam" id="NF003115">
    <property type="entry name" value="PRK04034.1"/>
    <property type="match status" value="1"/>
</dbReference>
<dbReference type="PANTHER" id="PTHR11758">
    <property type="entry name" value="40S RIBOSOMAL PROTEIN S15A"/>
    <property type="match status" value="1"/>
</dbReference>
<dbReference type="Pfam" id="PF00410">
    <property type="entry name" value="Ribosomal_S8"/>
    <property type="match status" value="1"/>
</dbReference>
<dbReference type="SUPFAM" id="SSF56047">
    <property type="entry name" value="Ribosomal protein S8"/>
    <property type="match status" value="1"/>
</dbReference>
<dbReference type="PROSITE" id="PS00053">
    <property type="entry name" value="RIBOSOMAL_S8"/>
    <property type="match status" value="1"/>
</dbReference>
<organism>
    <name type="scientific">Saccharomyces cerevisiae (strain ATCC 204508 / S288c)</name>
    <name type="common">Baker's yeast</name>
    <dbReference type="NCBI Taxonomy" id="559292"/>
    <lineage>
        <taxon>Eukaryota</taxon>
        <taxon>Fungi</taxon>
        <taxon>Dikarya</taxon>
        <taxon>Ascomycota</taxon>
        <taxon>Saccharomycotina</taxon>
        <taxon>Saccharomycetes</taxon>
        <taxon>Saccharomycetales</taxon>
        <taxon>Saccharomycetaceae</taxon>
        <taxon>Saccharomyces</taxon>
    </lineage>
</organism>
<protein>
    <recommendedName>
        <fullName evidence="5">Small ribosomal subunit protein uS8A</fullName>
    </recommendedName>
    <alternativeName>
        <fullName evidence="6">40S ribosomal protein S22-A</fullName>
    </alternativeName>
    <alternativeName>
        <fullName>RP50</fullName>
    </alternativeName>
    <alternativeName>
        <fullName>S24</fullName>
    </alternativeName>
    <alternativeName>
        <fullName>YP58</fullName>
    </alternativeName>
    <alternativeName>
        <fullName>YS22</fullName>
    </alternativeName>
</protein>
<accession>P0C0W1</accession>
<accession>D6VW01</accession>
<accession>P04648</accession>
<reference key="1">
    <citation type="journal article" date="1985" name="Nucleic Acids Res.">
        <title>The genes for yeast ribosomal proteins S24 and L46 are adjacent and divergently transcribed.</title>
        <authorList>
            <person name="Leer R.J."/>
            <person name="van Raamsdonk-Duin M.M.C."/>
            <person name="Kraakman P."/>
            <person name="Mager W.H."/>
            <person name="Planta R.J."/>
        </authorList>
    </citation>
    <scope>NUCLEOTIDE SEQUENCE [GENOMIC DNA]</scope>
</reference>
<reference key="2">
    <citation type="journal article" date="1994" name="Yeast">
        <title>The sequence of a 36 kb segment on the left arm of yeast chromosome X identifies 24 open reading frames including NUC1, PRP21 (SPP91), CDC6, CRY2, the gene for S24, a homologue to the aconitase gene ACO1 and two homologues to chromosome III genes.</title>
        <authorList>
            <person name="Purnelle B."/>
            <person name="Coster F."/>
            <person name="Goffeau A."/>
        </authorList>
    </citation>
    <scope>NUCLEOTIDE SEQUENCE [GENOMIC DNA]</scope>
    <source>
        <strain>ATCC 204508 / S288c</strain>
    </source>
</reference>
<reference key="3">
    <citation type="journal article" date="1996" name="EMBO J.">
        <title>Complete nucleotide sequence of Saccharomyces cerevisiae chromosome X.</title>
        <authorList>
            <person name="Galibert F."/>
            <person name="Alexandraki D."/>
            <person name="Baur A."/>
            <person name="Boles E."/>
            <person name="Chalwatzis N."/>
            <person name="Chuat J.-C."/>
            <person name="Coster F."/>
            <person name="Cziepluch C."/>
            <person name="de Haan M."/>
            <person name="Domdey H."/>
            <person name="Durand P."/>
            <person name="Entian K.-D."/>
            <person name="Gatius M."/>
            <person name="Goffeau A."/>
            <person name="Grivell L.A."/>
            <person name="Hennemann A."/>
            <person name="Herbert C.J."/>
            <person name="Heumann K."/>
            <person name="Hilger F."/>
            <person name="Hollenberg C.P."/>
            <person name="Huang M.-E."/>
            <person name="Jacq C."/>
            <person name="Jauniaux J.-C."/>
            <person name="Katsoulou C."/>
            <person name="Kirchrath L."/>
            <person name="Kleine K."/>
            <person name="Kordes E."/>
            <person name="Koetter P."/>
            <person name="Liebl S."/>
            <person name="Louis E.J."/>
            <person name="Manus V."/>
            <person name="Mewes H.-W."/>
            <person name="Miosga T."/>
            <person name="Obermaier B."/>
            <person name="Perea J."/>
            <person name="Pohl T.M."/>
            <person name="Portetelle D."/>
            <person name="Pujol A."/>
            <person name="Purnelle B."/>
            <person name="Ramezani Rad M."/>
            <person name="Rasmussen S.W."/>
            <person name="Rose M."/>
            <person name="Rossau R."/>
            <person name="Schaaff-Gerstenschlaeger I."/>
            <person name="Smits P.H.M."/>
            <person name="Scarcez T."/>
            <person name="Soriano N."/>
            <person name="To Van D."/>
            <person name="Tzermia M."/>
            <person name="Van Broekhoven A."/>
            <person name="Vandenbol M."/>
            <person name="Wedler H."/>
            <person name="von Wettstein D."/>
            <person name="Wambutt R."/>
            <person name="Zagulski M."/>
            <person name="Zollner A."/>
            <person name="Karpfinger-Hartl L."/>
        </authorList>
    </citation>
    <scope>NUCLEOTIDE SEQUENCE [LARGE SCALE GENOMIC DNA]</scope>
    <source>
        <strain>ATCC 204508 / S288c</strain>
    </source>
</reference>
<reference key="4">
    <citation type="journal article" date="2014" name="G3 (Bethesda)">
        <title>The reference genome sequence of Saccharomyces cerevisiae: Then and now.</title>
        <authorList>
            <person name="Engel S.R."/>
            <person name="Dietrich F.S."/>
            <person name="Fisk D.G."/>
            <person name="Binkley G."/>
            <person name="Balakrishnan R."/>
            <person name="Costanzo M.C."/>
            <person name="Dwight S.S."/>
            <person name="Hitz B.C."/>
            <person name="Karra K."/>
            <person name="Nash R.S."/>
            <person name="Weng S."/>
            <person name="Wong E.D."/>
            <person name="Lloyd P."/>
            <person name="Skrzypek M.S."/>
            <person name="Miyasato S.R."/>
            <person name="Simison M."/>
            <person name="Cherry J.M."/>
        </authorList>
    </citation>
    <scope>GENOME REANNOTATION</scope>
    <source>
        <strain>ATCC 204508 / S288c</strain>
    </source>
</reference>
<reference key="5">
    <citation type="journal article" date="1982" name="Biochemistry">
        <title>Isolation of seventeen proteins and amino-terminal amino acid sequences of eight proteins from cytoplasmic ribosomes of yeast.</title>
        <authorList>
            <person name="Otaka E."/>
            <person name="Higo K."/>
            <person name="Osawa S."/>
        </authorList>
    </citation>
    <scope>PROTEIN SEQUENCE OF 2-44</scope>
</reference>
<reference key="6">
    <citation type="journal article" date="1998" name="Yeast">
        <title>The list of cytoplasmic ribosomal proteins of Saccharomyces cerevisiae.</title>
        <authorList>
            <person name="Planta R.J."/>
            <person name="Mager W.H."/>
        </authorList>
    </citation>
    <scope>NOMENCLATURE</scope>
    <scope>SUBUNIT</scope>
</reference>
<reference key="7">
    <citation type="journal article" date="1999" name="J. Biol. Chem.">
        <title>The action of N-terminal acetyltransferases on yeast ribosomal proteins.</title>
        <authorList>
            <person name="Arnold R.J."/>
            <person name="Polevoda B."/>
            <person name="Reilly J.P."/>
            <person name="Sherman F."/>
        </authorList>
    </citation>
    <scope>CLEAVAGE OF INITIATOR METHIONINE</scope>
</reference>
<reference key="8">
    <citation type="journal article" date="2003" name="Nature">
        <title>Global analysis of protein expression in yeast.</title>
        <authorList>
            <person name="Ghaemmaghami S."/>
            <person name="Huh W.-K."/>
            <person name="Bower K."/>
            <person name="Howson R.W."/>
            <person name="Belle A."/>
            <person name="Dephoure N."/>
            <person name="O'Shea E.K."/>
            <person name="Weissman J.S."/>
        </authorList>
    </citation>
    <scope>LEVEL OF PROTEIN EXPRESSION [LARGE SCALE ANALYSIS]</scope>
</reference>
<reference key="9">
    <citation type="journal article" date="2014" name="Curr. Opin. Struct. Biol.">
        <title>A new system for naming ribosomal proteins.</title>
        <authorList>
            <person name="Ban N."/>
            <person name="Beckmann R."/>
            <person name="Cate J.H.D."/>
            <person name="Dinman J.D."/>
            <person name="Dragon F."/>
            <person name="Ellis S.R."/>
            <person name="Lafontaine D.L.J."/>
            <person name="Lindahl L."/>
            <person name="Liljas A."/>
            <person name="Lipton J.M."/>
            <person name="McAlear M.A."/>
            <person name="Moore P.B."/>
            <person name="Noller H.F."/>
            <person name="Ortega J."/>
            <person name="Panse V.G."/>
            <person name="Ramakrishnan V."/>
            <person name="Spahn C.M.T."/>
            <person name="Steitz T.A."/>
            <person name="Tchorzewski M."/>
            <person name="Tollervey D."/>
            <person name="Warren A.J."/>
            <person name="Williamson J.R."/>
            <person name="Wilson D."/>
            <person name="Yonath A."/>
            <person name="Yusupov M."/>
        </authorList>
    </citation>
    <scope>NOMENCLATURE</scope>
</reference>
<reference key="10">
    <citation type="journal article" date="2001" name="Cell">
        <title>Structure of the 80S ribosome from Saccharomyces cerevisiae -- tRNA-ribosome and subunit-subunit interactions.</title>
        <authorList>
            <person name="Spahn C.M.T."/>
            <person name="Beckmann R."/>
            <person name="Eswar N."/>
            <person name="Penczek P.A."/>
            <person name="Sali A."/>
            <person name="Blobel G."/>
            <person name="Frank J."/>
        </authorList>
    </citation>
    <scope>3D-STRUCTURE MODELING OF 4-130</scope>
    <scope>ELECTRON MICROSCOPY</scope>
</reference>
<reference key="11">
    <citation type="journal article" date="2004" name="EMBO J.">
        <title>Domain movements of elongation factor eEF2 and the eukaryotic 80S ribosome facilitate tRNA translocation.</title>
        <authorList>
            <person name="Spahn C.M.T."/>
            <person name="Gomez-Lorenzo M.G."/>
            <person name="Grassucci R.A."/>
            <person name="Joergensen R."/>
            <person name="Andersen G.R."/>
            <person name="Beckmann R."/>
            <person name="Penczek P.A."/>
            <person name="Ballesta J.P.G."/>
            <person name="Frank J."/>
        </authorList>
    </citation>
    <scope>3D-STRUCTURE MODELING</scope>
    <scope>ELECTRON MICROSCOPY</scope>
</reference>
<reference key="12">
    <citation type="journal article" date="2010" name="Science">
        <title>Crystal structure of the eukaryotic ribosome.</title>
        <authorList>
            <person name="Ben-Shem A."/>
            <person name="Jenner L."/>
            <person name="Yusupova G."/>
            <person name="Yusupov M."/>
        </authorList>
    </citation>
    <scope>X-RAY CRYSTALLOGRAPHY (4.00 ANGSTROMS) OF 80S RIBOSOME</scope>
</reference>
<reference key="13">
    <citation type="journal article" date="2011" name="Science">
        <title>The structure of the eukaryotic ribosome at 3.0 A resolution.</title>
        <authorList>
            <person name="Ben-Shem A."/>
            <person name="Garreau de Loubresse N."/>
            <person name="Melnikov S."/>
            <person name="Jenner L."/>
            <person name="Yusupova G."/>
            <person name="Yusupov M."/>
        </authorList>
    </citation>
    <scope>X-RAY CRYSTALLOGRAPHY (3.00 ANGSTROMS) OF 80S RIBOSOME</scope>
    <scope>SUBUNIT</scope>
    <scope>SUBCELLULAR LOCATION</scope>
</reference>
<feature type="initiator methionine" description="Removed" evidence="1 4">
    <location>
        <position position="1"/>
    </location>
</feature>
<feature type="chain" id="PRO_0000126623" description="Small ribosomal subunit protein uS8A">
    <location>
        <begin position="2"/>
        <end position="130"/>
    </location>
</feature>
<feature type="helix" evidence="12">
    <location>
        <begin position="6"/>
        <end position="20"/>
    </location>
</feature>
<feature type="strand" evidence="12">
    <location>
        <begin position="23"/>
        <end position="29"/>
    </location>
</feature>
<feature type="helix" evidence="12">
    <location>
        <begin position="32"/>
        <end position="43"/>
    </location>
</feature>
<feature type="strand" evidence="12">
    <location>
        <begin position="50"/>
        <end position="53"/>
    </location>
</feature>
<feature type="strand" evidence="12">
    <location>
        <begin position="56"/>
        <end position="58"/>
    </location>
</feature>
<feature type="strand" evidence="12">
    <location>
        <begin position="60"/>
        <end position="64"/>
    </location>
</feature>
<feature type="strand" evidence="12">
    <location>
        <begin position="71"/>
        <end position="74"/>
    </location>
</feature>
<feature type="helix" evidence="12">
    <location>
        <begin position="83"/>
        <end position="85"/>
    </location>
</feature>
<feature type="helix" evidence="12">
    <location>
        <begin position="86"/>
        <end position="93"/>
    </location>
</feature>
<feature type="strand" evidence="10">
    <location>
        <begin position="94"/>
        <end position="96"/>
    </location>
</feature>
<feature type="strand" evidence="11">
    <location>
        <begin position="97"/>
        <end position="99"/>
    </location>
</feature>
<feature type="strand" evidence="12">
    <location>
        <begin position="101"/>
        <end position="106"/>
    </location>
</feature>
<feature type="strand" evidence="12">
    <location>
        <begin position="109"/>
        <end position="112"/>
    </location>
</feature>
<feature type="helix" evidence="12">
    <location>
        <begin position="113"/>
        <end position="119"/>
    </location>
</feature>
<feature type="strand" evidence="12">
    <location>
        <begin position="123"/>
        <end position="130"/>
    </location>
</feature>
<gene>
    <name evidence="6" type="primary">RPS22A</name>
    <name type="synonym">RPS24</name>
    <name type="synonym">RPS24A</name>
    <name type="ordered locus">YJL190C</name>
    <name type="ORF">J0355</name>
</gene>
<evidence type="ECO:0000269" key="1">
    <source>
    </source>
</evidence>
<evidence type="ECO:0000269" key="2">
    <source>
    </source>
</evidence>
<evidence type="ECO:0000269" key="3">
    <source>
    </source>
</evidence>
<evidence type="ECO:0000269" key="4">
    <source>
    </source>
</evidence>
<evidence type="ECO:0000303" key="5">
    <source>
    </source>
</evidence>
<evidence type="ECO:0000303" key="6">
    <source>
    </source>
</evidence>
<evidence type="ECO:0000305" key="7"/>
<evidence type="ECO:0000305" key="8">
    <source>
    </source>
</evidence>
<evidence type="ECO:0000305" key="9">
    <source>
    </source>
</evidence>
<evidence type="ECO:0007829" key="10">
    <source>
        <dbReference type="PDB" id="6ZVI"/>
    </source>
</evidence>
<evidence type="ECO:0007829" key="11">
    <source>
        <dbReference type="PDB" id="8C00"/>
    </source>
</evidence>
<evidence type="ECO:0007829" key="12">
    <source>
        <dbReference type="PDB" id="8C01"/>
    </source>
</evidence>
<name>RS22A_YEAST</name>
<comment type="function">
    <text evidence="8">Component of the ribosome, a large ribonucleoprotein complex responsible for the synthesis of proteins in the cell. The small ribosomal subunit (SSU) binds messenger RNAs (mRNAs) and translates the encoded message by selecting cognate aminoacyl-transfer RNA (tRNA) molecules. The large subunit (LSU) contains the ribosomal catalytic site termed the peptidyl transferase center (PTC), which catalyzes the formation of peptide bonds, thereby polymerizing the amino acids delivered by tRNAs into a polypeptide chain. The nascent polypeptides leave the ribosome through a tunnel in the LSU and interact with protein factors that function in enzymatic processing, targeting, and the membrane insertion of nascent chains at the exit of the ribosomal tunnel.</text>
</comment>
<comment type="subunit">
    <text evidence="3 9">Component of the small ribosomal subunit (SSU). Mature yeast ribosomes consist of a small (40S) and a large (60S) subunit. The 40S small subunit contains 1 molecule of ribosomal RNA (18S rRNA) and 33 different proteins (encoded by 57 genes). The large 60S subunit contains 3 rRNA molecules (25S, 5.8S and 5S rRNA) and 46 different proteins (encoded by 81 genes) (PubMed:22096102, PubMed:9559554).</text>
</comment>
<comment type="subcellular location">
    <subcellularLocation>
        <location evidence="3">Cytoplasm</location>
    </subcellularLocation>
</comment>
<comment type="miscellaneous">
    <text evidence="2">Present with 40400 molecules/cell in log phase SD medium.</text>
</comment>
<comment type="miscellaneous">
    <text evidence="7">There are 2 genes for uS8 in yeast.</text>
</comment>
<comment type="similarity">
    <text evidence="7">Belongs to the universal ribosomal protein uS8 family.</text>
</comment>
<keyword id="KW-0002">3D-structure</keyword>
<keyword id="KW-0963">Cytoplasm</keyword>
<keyword id="KW-0903">Direct protein sequencing</keyword>
<keyword id="KW-1185">Reference proteome</keyword>
<keyword id="KW-0687">Ribonucleoprotein</keyword>
<keyword id="KW-0689">Ribosomal protein</keyword>
<sequence>MTRSSVLADALNAINNAEKTGKRQVLIRPSSKVIIKFLQVMQKHGYIGEFEYIDDHRSGKIVVQLNGRLNKCGVISPRFNVKIGDIEKWTANLLPARQFGYVILTTSAGIMDHEEARRKHVSGKILGFVY</sequence>